<accession>Q2GLH6</accession>
<protein>
    <recommendedName>
        <fullName evidence="1">Small ribosomal subunit protein bS6</fullName>
    </recommendedName>
    <alternativeName>
        <fullName evidence="2">30S ribosomal protein S6</fullName>
    </alternativeName>
</protein>
<evidence type="ECO:0000255" key="1">
    <source>
        <dbReference type="HAMAP-Rule" id="MF_00360"/>
    </source>
</evidence>
<evidence type="ECO:0000305" key="2"/>
<reference key="1">
    <citation type="journal article" date="2006" name="PLoS Genet.">
        <title>Comparative genomics of emerging human ehrlichiosis agents.</title>
        <authorList>
            <person name="Dunning Hotopp J.C."/>
            <person name="Lin M."/>
            <person name="Madupu R."/>
            <person name="Crabtree J."/>
            <person name="Angiuoli S.V."/>
            <person name="Eisen J.A."/>
            <person name="Seshadri R."/>
            <person name="Ren Q."/>
            <person name="Wu M."/>
            <person name="Utterback T.R."/>
            <person name="Smith S."/>
            <person name="Lewis M."/>
            <person name="Khouri H."/>
            <person name="Zhang C."/>
            <person name="Niu H."/>
            <person name="Lin Q."/>
            <person name="Ohashi N."/>
            <person name="Zhi N."/>
            <person name="Nelson W.C."/>
            <person name="Brinkac L.M."/>
            <person name="Dodson R.J."/>
            <person name="Rosovitz M.J."/>
            <person name="Sundaram J.P."/>
            <person name="Daugherty S.C."/>
            <person name="Davidsen T."/>
            <person name="Durkin A.S."/>
            <person name="Gwinn M.L."/>
            <person name="Haft D.H."/>
            <person name="Selengut J.D."/>
            <person name="Sullivan S.A."/>
            <person name="Zafar N."/>
            <person name="Zhou L."/>
            <person name="Benahmed F."/>
            <person name="Forberger H."/>
            <person name="Halpin R."/>
            <person name="Mulligan S."/>
            <person name="Robinson J."/>
            <person name="White O."/>
            <person name="Rikihisa Y."/>
            <person name="Tettelin H."/>
        </authorList>
    </citation>
    <scope>NUCLEOTIDE SEQUENCE [LARGE SCALE GENOMIC DNA]</scope>
    <source>
        <strain>HZ</strain>
    </source>
</reference>
<feature type="chain" id="PRO_1000005212" description="Small ribosomal subunit protein bS6">
    <location>
        <begin position="1"/>
        <end position="109"/>
    </location>
</feature>
<organism>
    <name type="scientific">Anaplasma phagocytophilum (strain HZ)</name>
    <dbReference type="NCBI Taxonomy" id="212042"/>
    <lineage>
        <taxon>Bacteria</taxon>
        <taxon>Pseudomonadati</taxon>
        <taxon>Pseudomonadota</taxon>
        <taxon>Alphaproteobacteria</taxon>
        <taxon>Rickettsiales</taxon>
        <taxon>Anaplasmataceae</taxon>
        <taxon>Anaplasma</taxon>
        <taxon>phagocytophilum group</taxon>
    </lineage>
</organism>
<name>RS6_ANAPZ</name>
<dbReference type="EMBL" id="CP000235">
    <property type="protein sequence ID" value="ABD43627.1"/>
    <property type="molecule type" value="Genomic_DNA"/>
</dbReference>
<dbReference type="RefSeq" id="WP_011450301.1">
    <property type="nucleotide sequence ID" value="NC_007797.1"/>
</dbReference>
<dbReference type="SMR" id="Q2GLH6"/>
<dbReference type="STRING" id="212042.APH_0151"/>
<dbReference type="PaxDb" id="212042-APH_0151"/>
<dbReference type="EnsemblBacteria" id="ABD43627">
    <property type="protein sequence ID" value="ABD43627"/>
    <property type="gene ID" value="APH_0151"/>
</dbReference>
<dbReference type="GeneID" id="92747617"/>
<dbReference type="KEGG" id="aph:APH_0151"/>
<dbReference type="eggNOG" id="COG0360">
    <property type="taxonomic scope" value="Bacteria"/>
</dbReference>
<dbReference type="HOGENOM" id="CLU_113441_2_0_5"/>
<dbReference type="Proteomes" id="UP000001943">
    <property type="component" value="Chromosome"/>
</dbReference>
<dbReference type="GO" id="GO:0022627">
    <property type="term" value="C:cytosolic small ribosomal subunit"/>
    <property type="evidence" value="ECO:0007669"/>
    <property type="project" value="TreeGrafter"/>
</dbReference>
<dbReference type="GO" id="GO:0070181">
    <property type="term" value="F:small ribosomal subunit rRNA binding"/>
    <property type="evidence" value="ECO:0007669"/>
    <property type="project" value="TreeGrafter"/>
</dbReference>
<dbReference type="GO" id="GO:0003735">
    <property type="term" value="F:structural constituent of ribosome"/>
    <property type="evidence" value="ECO:0007669"/>
    <property type="project" value="InterPro"/>
</dbReference>
<dbReference type="GO" id="GO:0006412">
    <property type="term" value="P:translation"/>
    <property type="evidence" value="ECO:0007669"/>
    <property type="project" value="UniProtKB-UniRule"/>
</dbReference>
<dbReference type="CDD" id="cd00473">
    <property type="entry name" value="bS6"/>
    <property type="match status" value="1"/>
</dbReference>
<dbReference type="Gene3D" id="3.30.70.60">
    <property type="match status" value="1"/>
</dbReference>
<dbReference type="HAMAP" id="MF_00360">
    <property type="entry name" value="Ribosomal_bS6"/>
    <property type="match status" value="1"/>
</dbReference>
<dbReference type="InterPro" id="IPR000529">
    <property type="entry name" value="Ribosomal_bS6"/>
</dbReference>
<dbReference type="InterPro" id="IPR035980">
    <property type="entry name" value="Ribosomal_bS6_sf"/>
</dbReference>
<dbReference type="InterPro" id="IPR020814">
    <property type="entry name" value="Ribosomal_S6_plastid/chlpt"/>
</dbReference>
<dbReference type="InterPro" id="IPR014717">
    <property type="entry name" value="Transl_elong_EF1B/ribsomal_bS6"/>
</dbReference>
<dbReference type="NCBIfam" id="TIGR00166">
    <property type="entry name" value="S6"/>
    <property type="match status" value="1"/>
</dbReference>
<dbReference type="PANTHER" id="PTHR21011">
    <property type="entry name" value="MITOCHONDRIAL 28S RIBOSOMAL PROTEIN S6"/>
    <property type="match status" value="1"/>
</dbReference>
<dbReference type="PANTHER" id="PTHR21011:SF1">
    <property type="entry name" value="SMALL RIBOSOMAL SUBUNIT PROTEIN BS6M"/>
    <property type="match status" value="1"/>
</dbReference>
<dbReference type="Pfam" id="PF01250">
    <property type="entry name" value="Ribosomal_S6"/>
    <property type="match status" value="1"/>
</dbReference>
<dbReference type="SUPFAM" id="SSF54995">
    <property type="entry name" value="Ribosomal protein S6"/>
    <property type="match status" value="1"/>
</dbReference>
<gene>
    <name evidence="1" type="primary">rpsF</name>
    <name type="ordered locus">APH_0151</name>
</gene>
<comment type="function">
    <text evidence="1">Binds together with bS18 to 16S ribosomal RNA.</text>
</comment>
<comment type="similarity">
    <text evidence="1">Belongs to the bacterial ribosomal protein bS6 family.</text>
</comment>
<sequence>MPFYEFAFIAQQGLTQYELEGLSKGLTALLVKMGAELVKYEYWGLLDFVYSIAKNNKGHYCMMYIRAEPAAMDEFKRKVKLNEDVLRFLCLKVDKVPEGRSAMMGSDQD</sequence>
<proteinExistence type="inferred from homology"/>
<keyword id="KW-0687">Ribonucleoprotein</keyword>
<keyword id="KW-0689">Ribosomal protein</keyword>
<keyword id="KW-0694">RNA-binding</keyword>
<keyword id="KW-0699">rRNA-binding</keyword>